<feature type="chain" id="PRO_0000126862" description="Phenylalanine--tRNA ligase beta subunit">
    <location>
        <begin position="1"/>
        <end position="773"/>
    </location>
</feature>
<feature type="domain" description="tRNA-binding" evidence="1">
    <location>
        <begin position="39"/>
        <end position="150"/>
    </location>
</feature>
<feature type="domain" description="B5" evidence="1">
    <location>
        <begin position="391"/>
        <end position="467"/>
    </location>
</feature>
<feature type="domain" description="FDX-ACB" evidence="1">
    <location>
        <begin position="682"/>
        <end position="773"/>
    </location>
</feature>
<feature type="binding site" evidence="1">
    <location>
        <position position="445"/>
    </location>
    <ligand>
        <name>Mg(2+)</name>
        <dbReference type="ChEBI" id="CHEBI:18420"/>
        <note>shared with alpha subunit</note>
    </ligand>
</feature>
<feature type="binding site" evidence="1">
    <location>
        <position position="451"/>
    </location>
    <ligand>
        <name>Mg(2+)</name>
        <dbReference type="ChEBI" id="CHEBI:18420"/>
        <note>shared with alpha subunit</note>
    </ligand>
</feature>
<feature type="binding site" evidence="1">
    <location>
        <position position="454"/>
    </location>
    <ligand>
        <name>Mg(2+)</name>
        <dbReference type="ChEBI" id="CHEBI:18420"/>
        <note>shared with alpha subunit</note>
    </ligand>
</feature>
<feature type="binding site" evidence="1">
    <location>
        <position position="455"/>
    </location>
    <ligand>
        <name>Mg(2+)</name>
        <dbReference type="ChEBI" id="CHEBI:18420"/>
        <note>shared with alpha subunit</note>
    </ligand>
</feature>
<keyword id="KW-0030">Aminoacyl-tRNA synthetase</keyword>
<keyword id="KW-0067">ATP-binding</keyword>
<keyword id="KW-0963">Cytoplasm</keyword>
<keyword id="KW-0436">Ligase</keyword>
<keyword id="KW-0460">Magnesium</keyword>
<keyword id="KW-0479">Metal-binding</keyword>
<keyword id="KW-0547">Nucleotide-binding</keyword>
<keyword id="KW-0648">Protein biosynthesis</keyword>
<keyword id="KW-0694">RNA-binding</keyword>
<keyword id="KW-0820">tRNA-binding</keyword>
<evidence type="ECO:0000255" key="1">
    <source>
        <dbReference type="HAMAP-Rule" id="MF_00283"/>
    </source>
</evidence>
<gene>
    <name evidence="1" type="primary">pheT</name>
    <name type="ordered locus">CJE0975</name>
</gene>
<accession>Q5HUR2</accession>
<proteinExistence type="inferred from homology"/>
<protein>
    <recommendedName>
        <fullName evidence="1">Phenylalanine--tRNA ligase beta subunit</fullName>
        <ecNumber evidence="1">6.1.1.20</ecNumber>
    </recommendedName>
    <alternativeName>
        <fullName evidence="1">Phenylalanyl-tRNA synthetase beta subunit</fullName>
        <shortName evidence="1">PheRS</shortName>
    </alternativeName>
</protein>
<sequence length="773" mass="87283">MIITKSWLNDWLELEEISSDKIAKTLNSIGIEVDRVGALKAPDKVVVGYVKEKIKHENSDKLSICQVDIGSETLQIVCGAANVDAGQFVAVATKGAIMPNGMEIKEAKLRGVDSCGMLCSSLELGFEKINEGIMLLDESIGKLELGRPLNTYEIFNDELIEVELTPNRGDCLSIYGIARDLAAALNLNLKEPKPFKESENVLGIGRILRLAAEKELNGLYNYRAIGLKEEIQTNLLLSLRLAQIEGLGKNSIENLLNYATHSTGVLFNAYDLSSFSEKDEEFIINLSKQVHGETKVSYKDKLLSFSGIFQNNESRCKDDSKIIIIEANYTDPLVIADAKIYHKDQDEKMLYRSFRGSEPKLNLGMDFLLGIFEHIPNLVIYSSSQQILTDKELPIIPISIEGISDIIGQNVDKDEVLKILKKLGFELILSGEGLINVKAPLHRPDIKNLSDICEEVVRIIGIDNIASKGLEFIEKNRLNSAYKNYIEFLNLRKRAVASGYFESLHYVLDNGEELKRLGFDSVKLKLINPITAELNTLRTTLLNHLLNAASLNAKNSKKIIKLFELGAVFNVNNQELNRIAFIHSGLKEEAKISNKAKPESVQFYDFLLDIKNIIGDFKLKSSKYNILSPYEQADIYLSDIKVGFIGRLHLKIENERDLPKTYICELDLDLIRQDFKIAKPYSKFPAITRDLSVLIPKGFEYNQIKNCIEELNLEILENFRLVDIYSDENLKEFYSITISFSFRDINKTLEDNQVNECMDKILNTLKNLGLDLR</sequence>
<reference key="1">
    <citation type="journal article" date="2005" name="PLoS Biol.">
        <title>Major structural differences and novel potential virulence mechanisms from the genomes of multiple Campylobacter species.</title>
        <authorList>
            <person name="Fouts D.E."/>
            <person name="Mongodin E.F."/>
            <person name="Mandrell R.E."/>
            <person name="Miller W.G."/>
            <person name="Rasko D.A."/>
            <person name="Ravel J."/>
            <person name="Brinkac L.M."/>
            <person name="DeBoy R.T."/>
            <person name="Parker C.T."/>
            <person name="Daugherty S.C."/>
            <person name="Dodson R.J."/>
            <person name="Durkin A.S."/>
            <person name="Madupu R."/>
            <person name="Sullivan S.A."/>
            <person name="Shetty J.U."/>
            <person name="Ayodeji M.A."/>
            <person name="Shvartsbeyn A."/>
            <person name="Schatz M.C."/>
            <person name="Badger J.H."/>
            <person name="Fraser C.M."/>
            <person name="Nelson K.E."/>
        </authorList>
    </citation>
    <scope>NUCLEOTIDE SEQUENCE [LARGE SCALE GENOMIC DNA]</scope>
    <source>
        <strain>RM1221</strain>
    </source>
</reference>
<comment type="catalytic activity">
    <reaction evidence="1">
        <text>tRNA(Phe) + L-phenylalanine + ATP = L-phenylalanyl-tRNA(Phe) + AMP + diphosphate + H(+)</text>
        <dbReference type="Rhea" id="RHEA:19413"/>
        <dbReference type="Rhea" id="RHEA-COMP:9668"/>
        <dbReference type="Rhea" id="RHEA-COMP:9699"/>
        <dbReference type="ChEBI" id="CHEBI:15378"/>
        <dbReference type="ChEBI" id="CHEBI:30616"/>
        <dbReference type="ChEBI" id="CHEBI:33019"/>
        <dbReference type="ChEBI" id="CHEBI:58095"/>
        <dbReference type="ChEBI" id="CHEBI:78442"/>
        <dbReference type="ChEBI" id="CHEBI:78531"/>
        <dbReference type="ChEBI" id="CHEBI:456215"/>
        <dbReference type="EC" id="6.1.1.20"/>
    </reaction>
</comment>
<comment type="cofactor">
    <cofactor evidence="1">
        <name>Mg(2+)</name>
        <dbReference type="ChEBI" id="CHEBI:18420"/>
    </cofactor>
    <text evidence="1">Binds 2 magnesium ions per tetramer.</text>
</comment>
<comment type="subunit">
    <text evidence="1">Tetramer of two alpha and two beta subunits.</text>
</comment>
<comment type="subcellular location">
    <subcellularLocation>
        <location evidence="1">Cytoplasm</location>
    </subcellularLocation>
</comment>
<comment type="similarity">
    <text evidence="1">Belongs to the phenylalanyl-tRNA synthetase beta subunit family. Type 1 subfamily.</text>
</comment>
<organism>
    <name type="scientific">Campylobacter jejuni (strain RM1221)</name>
    <dbReference type="NCBI Taxonomy" id="195099"/>
    <lineage>
        <taxon>Bacteria</taxon>
        <taxon>Pseudomonadati</taxon>
        <taxon>Campylobacterota</taxon>
        <taxon>Epsilonproteobacteria</taxon>
        <taxon>Campylobacterales</taxon>
        <taxon>Campylobacteraceae</taxon>
        <taxon>Campylobacter</taxon>
    </lineage>
</organism>
<dbReference type="EC" id="6.1.1.20" evidence="1"/>
<dbReference type="EMBL" id="CP000025">
    <property type="protein sequence ID" value="AAW35308.1"/>
    <property type="molecule type" value="Genomic_DNA"/>
</dbReference>
<dbReference type="RefSeq" id="WP_011049808.1">
    <property type="nucleotide sequence ID" value="NC_003912.7"/>
</dbReference>
<dbReference type="SMR" id="Q5HUR2"/>
<dbReference type="KEGG" id="cjr:CJE0975"/>
<dbReference type="HOGENOM" id="CLU_016891_2_1_7"/>
<dbReference type="GO" id="GO:0009328">
    <property type="term" value="C:phenylalanine-tRNA ligase complex"/>
    <property type="evidence" value="ECO:0007669"/>
    <property type="project" value="TreeGrafter"/>
</dbReference>
<dbReference type="GO" id="GO:0005524">
    <property type="term" value="F:ATP binding"/>
    <property type="evidence" value="ECO:0007669"/>
    <property type="project" value="UniProtKB-UniRule"/>
</dbReference>
<dbReference type="GO" id="GO:0000287">
    <property type="term" value="F:magnesium ion binding"/>
    <property type="evidence" value="ECO:0007669"/>
    <property type="project" value="UniProtKB-UniRule"/>
</dbReference>
<dbReference type="GO" id="GO:0004826">
    <property type="term" value="F:phenylalanine-tRNA ligase activity"/>
    <property type="evidence" value="ECO:0007669"/>
    <property type="project" value="UniProtKB-UniRule"/>
</dbReference>
<dbReference type="GO" id="GO:0000049">
    <property type="term" value="F:tRNA binding"/>
    <property type="evidence" value="ECO:0007669"/>
    <property type="project" value="UniProtKB-KW"/>
</dbReference>
<dbReference type="GO" id="GO:0006432">
    <property type="term" value="P:phenylalanyl-tRNA aminoacylation"/>
    <property type="evidence" value="ECO:0007669"/>
    <property type="project" value="UniProtKB-UniRule"/>
</dbReference>
<dbReference type="CDD" id="cd00769">
    <property type="entry name" value="PheRS_beta_core"/>
    <property type="match status" value="1"/>
</dbReference>
<dbReference type="CDD" id="cd02796">
    <property type="entry name" value="tRNA_bind_bactPheRS"/>
    <property type="match status" value="1"/>
</dbReference>
<dbReference type="FunFam" id="2.40.50.140:FF:000045">
    <property type="entry name" value="Phenylalanine--tRNA ligase beta subunit"/>
    <property type="match status" value="1"/>
</dbReference>
<dbReference type="Gene3D" id="3.30.56.10">
    <property type="match status" value="2"/>
</dbReference>
<dbReference type="Gene3D" id="3.30.930.10">
    <property type="entry name" value="Bira Bifunctional Protein, Domain 2"/>
    <property type="match status" value="1"/>
</dbReference>
<dbReference type="Gene3D" id="3.30.70.380">
    <property type="entry name" value="Ferrodoxin-fold anticodon-binding domain"/>
    <property type="match status" value="1"/>
</dbReference>
<dbReference type="Gene3D" id="2.40.50.140">
    <property type="entry name" value="Nucleic acid-binding proteins"/>
    <property type="match status" value="1"/>
</dbReference>
<dbReference type="Gene3D" id="3.50.40.10">
    <property type="entry name" value="Phenylalanyl-trna Synthetase, Chain B, domain 3"/>
    <property type="match status" value="1"/>
</dbReference>
<dbReference type="HAMAP" id="MF_00283">
    <property type="entry name" value="Phe_tRNA_synth_beta1"/>
    <property type="match status" value="1"/>
</dbReference>
<dbReference type="InterPro" id="IPR045864">
    <property type="entry name" value="aa-tRNA-synth_II/BPL/LPL"/>
</dbReference>
<dbReference type="InterPro" id="IPR005146">
    <property type="entry name" value="B3/B4_tRNA-bd"/>
</dbReference>
<dbReference type="InterPro" id="IPR009061">
    <property type="entry name" value="DNA-bd_dom_put_sf"/>
</dbReference>
<dbReference type="InterPro" id="IPR005121">
    <property type="entry name" value="Fdx_antiC-bd"/>
</dbReference>
<dbReference type="InterPro" id="IPR036690">
    <property type="entry name" value="Fdx_antiC-bd_sf"/>
</dbReference>
<dbReference type="InterPro" id="IPR012340">
    <property type="entry name" value="NA-bd_OB-fold"/>
</dbReference>
<dbReference type="InterPro" id="IPR045060">
    <property type="entry name" value="Phe-tRNA-ligase_IIc_bsu"/>
</dbReference>
<dbReference type="InterPro" id="IPR004532">
    <property type="entry name" value="Phe-tRNA-ligase_IIc_bsu_bact"/>
</dbReference>
<dbReference type="InterPro" id="IPR020825">
    <property type="entry name" value="Phe-tRNA_synthase-like_B3/B4"/>
</dbReference>
<dbReference type="InterPro" id="IPR041616">
    <property type="entry name" value="PheRS_beta_core"/>
</dbReference>
<dbReference type="InterPro" id="IPR002547">
    <property type="entry name" value="tRNA-bd_dom"/>
</dbReference>
<dbReference type="InterPro" id="IPR033714">
    <property type="entry name" value="tRNA_bind_bactPheRS"/>
</dbReference>
<dbReference type="InterPro" id="IPR005147">
    <property type="entry name" value="tRNA_synthase_B5-dom"/>
</dbReference>
<dbReference type="NCBIfam" id="TIGR00472">
    <property type="entry name" value="pheT_bact"/>
    <property type="match status" value="1"/>
</dbReference>
<dbReference type="NCBIfam" id="NF045760">
    <property type="entry name" value="YtpR"/>
    <property type="match status" value="1"/>
</dbReference>
<dbReference type="PANTHER" id="PTHR10947:SF0">
    <property type="entry name" value="PHENYLALANINE--TRNA LIGASE BETA SUBUNIT"/>
    <property type="match status" value="1"/>
</dbReference>
<dbReference type="PANTHER" id="PTHR10947">
    <property type="entry name" value="PHENYLALANYL-TRNA SYNTHETASE BETA CHAIN AND LEUCINE-RICH REPEAT-CONTAINING PROTEIN 47"/>
    <property type="match status" value="1"/>
</dbReference>
<dbReference type="Pfam" id="PF03483">
    <property type="entry name" value="B3_4"/>
    <property type="match status" value="1"/>
</dbReference>
<dbReference type="Pfam" id="PF03484">
    <property type="entry name" value="B5"/>
    <property type="match status" value="1"/>
</dbReference>
<dbReference type="Pfam" id="PF03147">
    <property type="entry name" value="FDX-ACB"/>
    <property type="match status" value="1"/>
</dbReference>
<dbReference type="Pfam" id="PF01588">
    <property type="entry name" value="tRNA_bind"/>
    <property type="match status" value="1"/>
</dbReference>
<dbReference type="Pfam" id="PF17759">
    <property type="entry name" value="tRNA_synthFbeta"/>
    <property type="match status" value="1"/>
</dbReference>
<dbReference type="SMART" id="SM00873">
    <property type="entry name" value="B3_4"/>
    <property type="match status" value="1"/>
</dbReference>
<dbReference type="SMART" id="SM00874">
    <property type="entry name" value="B5"/>
    <property type="match status" value="1"/>
</dbReference>
<dbReference type="SMART" id="SM00896">
    <property type="entry name" value="FDX-ACB"/>
    <property type="match status" value="1"/>
</dbReference>
<dbReference type="SUPFAM" id="SSF54991">
    <property type="entry name" value="Anticodon-binding domain of PheRS"/>
    <property type="match status" value="1"/>
</dbReference>
<dbReference type="SUPFAM" id="SSF55681">
    <property type="entry name" value="Class II aaRS and biotin synthetases"/>
    <property type="match status" value="1"/>
</dbReference>
<dbReference type="SUPFAM" id="SSF50249">
    <property type="entry name" value="Nucleic acid-binding proteins"/>
    <property type="match status" value="1"/>
</dbReference>
<dbReference type="SUPFAM" id="SSF56037">
    <property type="entry name" value="PheT/TilS domain"/>
    <property type="match status" value="1"/>
</dbReference>
<dbReference type="SUPFAM" id="SSF46955">
    <property type="entry name" value="Putative DNA-binding domain"/>
    <property type="match status" value="1"/>
</dbReference>
<dbReference type="PROSITE" id="PS51483">
    <property type="entry name" value="B5"/>
    <property type="match status" value="1"/>
</dbReference>
<dbReference type="PROSITE" id="PS51447">
    <property type="entry name" value="FDX_ACB"/>
    <property type="match status" value="1"/>
</dbReference>
<dbReference type="PROSITE" id="PS50886">
    <property type="entry name" value="TRBD"/>
    <property type="match status" value="1"/>
</dbReference>
<name>SYFB_CAMJR</name>